<gene>
    <name evidence="1" type="primary">rimP</name>
    <name type="ordered locus">CFF8240_1491</name>
</gene>
<feature type="chain" id="PRO_0000384620" description="Ribosome maturation factor RimP">
    <location>
        <begin position="1"/>
        <end position="140"/>
    </location>
</feature>
<sequence>MTDLSNLVSQCGVDLYDAEVVNENGRVIYRVYITKNGGVSLEECEAVSKLLSPIYDVMPPVSGEWILEVSSPGLERKLSKIEHFTLSIGEFAKIILNDKTEIKGKIVSVKDDNICINIKNNESIEVKFENIKKAKTYMEW</sequence>
<organism>
    <name type="scientific">Campylobacter fetus subsp. fetus (strain 82-40)</name>
    <dbReference type="NCBI Taxonomy" id="360106"/>
    <lineage>
        <taxon>Bacteria</taxon>
        <taxon>Pseudomonadati</taxon>
        <taxon>Campylobacterota</taxon>
        <taxon>Epsilonproteobacteria</taxon>
        <taxon>Campylobacterales</taxon>
        <taxon>Campylobacteraceae</taxon>
        <taxon>Campylobacter</taxon>
    </lineage>
</organism>
<accession>A0RQZ2</accession>
<keyword id="KW-0963">Cytoplasm</keyword>
<keyword id="KW-0690">Ribosome biogenesis</keyword>
<evidence type="ECO:0000255" key="1">
    <source>
        <dbReference type="HAMAP-Rule" id="MF_01077"/>
    </source>
</evidence>
<comment type="function">
    <text evidence="1">Required for maturation of 30S ribosomal subunits.</text>
</comment>
<comment type="subcellular location">
    <subcellularLocation>
        <location evidence="1">Cytoplasm</location>
    </subcellularLocation>
</comment>
<comment type="similarity">
    <text evidence="1">Belongs to the RimP family.</text>
</comment>
<reference key="1">
    <citation type="submission" date="2006-11" db="EMBL/GenBank/DDBJ databases">
        <title>Sequence of Campylobacter fetus subsp. fetus 82-40.</title>
        <authorList>
            <person name="Fouts D.E."/>
            <person name="Nelson K.E."/>
        </authorList>
    </citation>
    <scope>NUCLEOTIDE SEQUENCE [LARGE SCALE GENOMIC DNA]</scope>
    <source>
        <strain>82-40</strain>
    </source>
</reference>
<dbReference type="EMBL" id="CP000487">
    <property type="protein sequence ID" value="ABK81851.1"/>
    <property type="molecule type" value="Genomic_DNA"/>
</dbReference>
<dbReference type="RefSeq" id="WP_002850487.1">
    <property type="nucleotide sequence ID" value="NC_008599.1"/>
</dbReference>
<dbReference type="SMR" id="A0RQZ2"/>
<dbReference type="GeneID" id="61065308"/>
<dbReference type="KEGG" id="cff:CFF8240_1491"/>
<dbReference type="eggNOG" id="COG0779">
    <property type="taxonomic scope" value="Bacteria"/>
</dbReference>
<dbReference type="HOGENOM" id="CLU_070525_2_2_7"/>
<dbReference type="Proteomes" id="UP000000760">
    <property type="component" value="Chromosome"/>
</dbReference>
<dbReference type="GO" id="GO:0005829">
    <property type="term" value="C:cytosol"/>
    <property type="evidence" value="ECO:0007669"/>
    <property type="project" value="TreeGrafter"/>
</dbReference>
<dbReference type="GO" id="GO:0000028">
    <property type="term" value="P:ribosomal small subunit assembly"/>
    <property type="evidence" value="ECO:0007669"/>
    <property type="project" value="TreeGrafter"/>
</dbReference>
<dbReference type="GO" id="GO:0006412">
    <property type="term" value="P:translation"/>
    <property type="evidence" value="ECO:0007669"/>
    <property type="project" value="TreeGrafter"/>
</dbReference>
<dbReference type="CDD" id="cd01734">
    <property type="entry name" value="YlxS_C"/>
    <property type="match status" value="1"/>
</dbReference>
<dbReference type="Gene3D" id="2.30.30.180">
    <property type="entry name" value="Ribosome maturation factor RimP, C-terminal domain"/>
    <property type="match status" value="1"/>
</dbReference>
<dbReference type="Gene3D" id="3.30.300.70">
    <property type="entry name" value="RimP-like superfamily, N-terminal"/>
    <property type="match status" value="1"/>
</dbReference>
<dbReference type="HAMAP" id="MF_01077">
    <property type="entry name" value="RimP"/>
    <property type="match status" value="1"/>
</dbReference>
<dbReference type="InterPro" id="IPR003728">
    <property type="entry name" value="Ribosome_maturation_RimP"/>
</dbReference>
<dbReference type="InterPro" id="IPR028998">
    <property type="entry name" value="RimP_C"/>
</dbReference>
<dbReference type="InterPro" id="IPR036847">
    <property type="entry name" value="RimP_C_sf"/>
</dbReference>
<dbReference type="InterPro" id="IPR028989">
    <property type="entry name" value="RimP_N"/>
</dbReference>
<dbReference type="InterPro" id="IPR035956">
    <property type="entry name" value="RimP_N_sf"/>
</dbReference>
<dbReference type="NCBIfam" id="NF011232">
    <property type="entry name" value="PRK14639.1"/>
    <property type="match status" value="1"/>
</dbReference>
<dbReference type="PANTHER" id="PTHR33867">
    <property type="entry name" value="RIBOSOME MATURATION FACTOR RIMP"/>
    <property type="match status" value="1"/>
</dbReference>
<dbReference type="PANTHER" id="PTHR33867:SF1">
    <property type="entry name" value="RIBOSOME MATURATION FACTOR RIMP"/>
    <property type="match status" value="1"/>
</dbReference>
<dbReference type="Pfam" id="PF17384">
    <property type="entry name" value="DUF150_C"/>
    <property type="match status" value="1"/>
</dbReference>
<dbReference type="Pfam" id="PF02576">
    <property type="entry name" value="RimP_N"/>
    <property type="match status" value="1"/>
</dbReference>
<dbReference type="SUPFAM" id="SSF74942">
    <property type="entry name" value="YhbC-like, C-terminal domain"/>
    <property type="match status" value="1"/>
</dbReference>
<dbReference type="SUPFAM" id="SSF75420">
    <property type="entry name" value="YhbC-like, N-terminal domain"/>
    <property type="match status" value="1"/>
</dbReference>
<protein>
    <recommendedName>
        <fullName evidence="1">Ribosome maturation factor RimP</fullName>
    </recommendedName>
</protein>
<proteinExistence type="inferred from homology"/>
<name>RIMP_CAMFF</name>